<sequence length="884" mass="96141">MNIPTKFTTSKIRSDFLEFFKNKGHKIVPSAPLVPGNDPTLLFTNSGMVQFKDVFLGAEKRSEVRVADVQCCLRAGGKHNDLDSVGYTARHHTFFEMLGNWSFGDYFKKEAITWAWELLTHVWELPPERLLVTVYRTDDESYALWRDMVGVPEDRIVRIGDNKGAPFASDNFWQMADTGPCGPCTEIFYDHGEHIPGGPPGSPGEDGDRFIEIWNLVFMQFDRQSDGTLVPLPTPCVDTGMGLERLAAILQHVHTNYEIDLFQTLILKAAELTAVADVQNKSLCVIADHSRACAFLIVDGVLPSNEGRGYVLRRIIRRALRHGWMLGVRQPFFNNMVPTLVAVMGDAYPKLQAAAESVMRTLLAEEERFAETLDVGMKIFNEVAAKVANGVIPGSDAFRLYDTYGFPVDLTADIARERGMRVDMAGFEAAMTQQRKTARAAGKFGRGVQLSAERAAMLSPTVFLGYEQLQADGLRVVALLSDGGLTDSASVGDEVIVLTDRTPFYAESGGQVGDIGTLMASDGVRLEVTDTQKLMGQFHGHVTRIVQGGVKVGDVLSGSVAVARRKMVALNHSATHLLHCALRSVFGTHVAQKGSLVAPDRLRFDFSHFEPISAAQMTLIERMVNDEVRANHLVMIEQMGMQAALDAGAMALFGEKYGEHVRVVKMGTSVELCGGTHITRTGDIGLFKIISECGVSSGVRRIEAVTGESALNHVLAEEHRLYEVAGLIGSNANDVVNHIRQLTDRQKTLERELEKLKGKLISGTITDLLSTAVNVADVKVVAARLDGLDGKALREALDRLKLQLSDAVIVLAGVTGGKVALVTAVNGPRAMGKVKADTLLSHVATQINGRGGGRVDFAQGGGEDGPSLRSALDGVATWVKQHLD</sequence>
<proteinExistence type="inferred from homology"/>
<protein>
    <recommendedName>
        <fullName evidence="1">Alanine--tRNA ligase</fullName>
        <ecNumber evidence="1">6.1.1.7</ecNumber>
    </recommendedName>
    <alternativeName>
        <fullName evidence="1">Alanyl-tRNA synthetase</fullName>
        <shortName evidence="1">AlaRS</shortName>
    </alternativeName>
</protein>
<dbReference type="EC" id="6.1.1.7" evidence="1"/>
<dbReference type="EMBL" id="CP000941">
    <property type="protein sequence ID" value="ACA11141.1"/>
    <property type="molecule type" value="Genomic_DNA"/>
</dbReference>
<dbReference type="RefSeq" id="WP_004085530.1">
    <property type="nucleotide sequence ID" value="NC_010513.1"/>
</dbReference>
<dbReference type="SMR" id="B0U1K9"/>
<dbReference type="KEGG" id="xfm:Xfasm12_0101"/>
<dbReference type="HOGENOM" id="CLU_004485_1_1_6"/>
<dbReference type="GO" id="GO:0005829">
    <property type="term" value="C:cytosol"/>
    <property type="evidence" value="ECO:0007669"/>
    <property type="project" value="TreeGrafter"/>
</dbReference>
<dbReference type="GO" id="GO:0004813">
    <property type="term" value="F:alanine-tRNA ligase activity"/>
    <property type="evidence" value="ECO:0007669"/>
    <property type="project" value="UniProtKB-UniRule"/>
</dbReference>
<dbReference type="GO" id="GO:0002161">
    <property type="term" value="F:aminoacyl-tRNA deacylase activity"/>
    <property type="evidence" value="ECO:0007669"/>
    <property type="project" value="TreeGrafter"/>
</dbReference>
<dbReference type="GO" id="GO:0005524">
    <property type="term" value="F:ATP binding"/>
    <property type="evidence" value="ECO:0007669"/>
    <property type="project" value="UniProtKB-UniRule"/>
</dbReference>
<dbReference type="GO" id="GO:0000049">
    <property type="term" value="F:tRNA binding"/>
    <property type="evidence" value="ECO:0007669"/>
    <property type="project" value="UniProtKB-KW"/>
</dbReference>
<dbReference type="GO" id="GO:0008270">
    <property type="term" value="F:zinc ion binding"/>
    <property type="evidence" value="ECO:0007669"/>
    <property type="project" value="UniProtKB-UniRule"/>
</dbReference>
<dbReference type="GO" id="GO:0006419">
    <property type="term" value="P:alanyl-tRNA aminoacylation"/>
    <property type="evidence" value="ECO:0007669"/>
    <property type="project" value="UniProtKB-UniRule"/>
</dbReference>
<dbReference type="GO" id="GO:0045892">
    <property type="term" value="P:negative regulation of DNA-templated transcription"/>
    <property type="evidence" value="ECO:0007669"/>
    <property type="project" value="TreeGrafter"/>
</dbReference>
<dbReference type="CDD" id="cd00673">
    <property type="entry name" value="AlaRS_core"/>
    <property type="match status" value="1"/>
</dbReference>
<dbReference type="FunFam" id="3.10.310.40:FF:000001">
    <property type="entry name" value="Alanine--tRNA ligase"/>
    <property type="match status" value="1"/>
</dbReference>
<dbReference type="FunFam" id="3.30.54.20:FF:000001">
    <property type="entry name" value="Alanine--tRNA ligase"/>
    <property type="match status" value="1"/>
</dbReference>
<dbReference type="FunFam" id="3.30.930.10:FF:000004">
    <property type="entry name" value="Alanine--tRNA ligase"/>
    <property type="match status" value="1"/>
</dbReference>
<dbReference type="FunFam" id="3.30.980.10:FF:000004">
    <property type="entry name" value="Alanine--tRNA ligase, cytoplasmic"/>
    <property type="match status" value="1"/>
</dbReference>
<dbReference type="Gene3D" id="2.40.30.130">
    <property type="match status" value="1"/>
</dbReference>
<dbReference type="Gene3D" id="3.10.310.40">
    <property type="match status" value="1"/>
</dbReference>
<dbReference type="Gene3D" id="3.30.54.20">
    <property type="match status" value="1"/>
</dbReference>
<dbReference type="Gene3D" id="6.10.250.550">
    <property type="match status" value="1"/>
</dbReference>
<dbReference type="Gene3D" id="3.30.930.10">
    <property type="entry name" value="Bira Bifunctional Protein, Domain 2"/>
    <property type="match status" value="1"/>
</dbReference>
<dbReference type="Gene3D" id="3.30.980.10">
    <property type="entry name" value="Threonyl-trna Synthetase, Chain A, domain 2"/>
    <property type="match status" value="1"/>
</dbReference>
<dbReference type="HAMAP" id="MF_00036_B">
    <property type="entry name" value="Ala_tRNA_synth_B"/>
    <property type="match status" value="1"/>
</dbReference>
<dbReference type="InterPro" id="IPR045864">
    <property type="entry name" value="aa-tRNA-synth_II/BPL/LPL"/>
</dbReference>
<dbReference type="InterPro" id="IPR002318">
    <property type="entry name" value="Ala-tRNA-lgiase_IIc"/>
</dbReference>
<dbReference type="InterPro" id="IPR018162">
    <property type="entry name" value="Ala-tRNA-ligase_IIc_anticod-bd"/>
</dbReference>
<dbReference type="InterPro" id="IPR018165">
    <property type="entry name" value="Ala-tRNA-synth_IIc_core"/>
</dbReference>
<dbReference type="InterPro" id="IPR018164">
    <property type="entry name" value="Ala-tRNA-synth_IIc_N"/>
</dbReference>
<dbReference type="InterPro" id="IPR050058">
    <property type="entry name" value="Ala-tRNA_ligase"/>
</dbReference>
<dbReference type="InterPro" id="IPR023033">
    <property type="entry name" value="Ala_tRNA_ligase_euk/bac"/>
</dbReference>
<dbReference type="InterPro" id="IPR003156">
    <property type="entry name" value="DHHA1_dom"/>
</dbReference>
<dbReference type="InterPro" id="IPR018163">
    <property type="entry name" value="Thr/Ala-tRNA-synth_IIc_edit"/>
</dbReference>
<dbReference type="InterPro" id="IPR009000">
    <property type="entry name" value="Transl_B-barrel_sf"/>
</dbReference>
<dbReference type="InterPro" id="IPR012947">
    <property type="entry name" value="tRNA_SAD"/>
</dbReference>
<dbReference type="NCBIfam" id="TIGR00344">
    <property type="entry name" value="alaS"/>
    <property type="match status" value="1"/>
</dbReference>
<dbReference type="PANTHER" id="PTHR11777:SF9">
    <property type="entry name" value="ALANINE--TRNA LIGASE, CYTOPLASMIC"/>
    <property type="match status" value="1"/>
</dbReference>
<dbReference type="PANTHER" id="PTHR11777">
    <property type="entry name" value="ALANYL-TRNA SYNTHETASE"/>
    <property type="match status" value="1"/>
</dbReference>
<dbReference type="Pfam" id="PF02272">
    <property type="entry name" value="DHHA1"/>
    <property type="match status" value="1"/>
</dbReference>
<dbReference type="Pfam" id="PF01411">
    <property type="entry name" value="tRNA-synt_2c"/>
    <property type="match status" value="1"/>
</dbReference>
<dbReference type="Pfam" id="PF07973">
    <property type="entry name" value="tRNA_SAD"/>
    <property type="match status" value="1"/>
</dbReference>
<dbReference type="PRINTS" id="PR00980">
    <property type="entry name" value="TRNASYNTHALA"/>
</dbReference>
<dbReference type="SMART" id="SM00863">
    <property type="entry name" value="tRNA_SAD"/>
    <property type="match status" value="1"/>
</dbReference>
<dbReference type="SUPFAM" id="SSF55681">
    <property type="entry name" value="Class II aaRS and biotin synthetases"/>
    <property type="match status" value="1"/>
</dbReference>
<dbReference type="SUPFAM" id="SSF101353">
    <property type="entry name" value="Putative anticodon-binding domain of alanyl-tRNA synthetase (AlaRS)"/>
    <property type="match status" value="1"/>
</dbReference>
<dbReference type="SUPFAM" id="SSF55186">
    <property type="entry name" value="ThrRS/AlaRS common domain"/>
    <property type="match status" value="1"/>
</dbReference>
<dbReference type="SUPFAM" id="SSF50447">
    <property type="entry name" value="Translation proteins"/>
    <property type="match status" value="1"/>
</dbReference>
<dbReference type="PROSITE" id="PS50860">
    <property type="entry name" value="AA_TRNA_LIGASE_II_ALA"/>
    <property type="match status" value="1"/>
</dbReference>
<gene>
    <name evidence="1" type="primary">alaS</name>
    <name type="ordered locus">Xfasm12_0101</name>
</gene>
<feature type="chain" id="PRO_0000347867" description="Alanine--tRNA ligase">
    <location>
        <begin position="1"/>
        <end position="884"/>
    </location>
</feature>
<feature type="binding site" evidence="1">
    <location>
        <position position="572"/>
    </location>
    <ligand>
        <name>Zn(2+)</name>
        <dbReference type="ChEBI" id="CHEBI:29105"/>
    </ligand>
</feature>
<feature type="binding site" evidence="1">
    <location>
        <position position="576"/>
    </location>
    <ligand>
        <name>Zn(2+)</name>
        <dbReference type="ChEBI" id="CHEBI:29105"/>
    </ligand>
</feature>
<feature type="binding site" evidence="1">
    <location>
        <position position="673"/>
    </location>
    <ligand>
        <name>Zn(2+)</name>
        <dbReference type="ChEBI" id="CHEBI:29105"/>
    </ligand>
</feature>
<feature type="binding site" evidence="1">
    <location>
        <position position="677"/>
    </location>
    <ligand>
        <name>Zn(2+)</name>
        <dbReference type="ChEBI" id="CHEBI:29105"/>
    </ligand>
</feature>
<comment type="function">
    <text evidence="1">Catalyzes the attachment of alanine to tRNA(Ala) in a two-step reaction: alanine is first activated by ATP to form Ala-AMP and then transferred to the acceptor end of tRNA(Ala). Also edits incorrectly charged Ser-tRNA(Ala) and Gly-tRNA(Ala) via its editing domain.</text>
</comment>
<comment type="catalytic activity">
    <reaction evidence="1">
        <text>tRNA(Ala) + L-alanine + ATP = L-alanyl-tRNA(Ala) + AMP + diphosphate</text>
        <dbReference type="Rhea" id="RHEA:12540"/>
        <dbReference type="Rhea" id="RHEA-COMP:9657"/>
        <dbReference type="Rhea" id="RHEA-COMP:9923"/>
        <dbReference type="ChEBI" id="CHEBI:30616"/>
        <dbReference type="ChEBI" id="CHEBI:33019"/>
        <dbReference type="ChEBI" id="CHEBI:57972"/>
        <dbReference type="ChEBI" id="CHEBI:78442"/>
        <dbReference type="ChEBI" id="CHEBI:78497"/>
        <dbReference type="ChEBI" id="CHEBI:456215"/>
        <dbReference type="EC" id="6.1.1.7"/>
    </reaction>
</comment>
<comment type="cofactor">
    <cofactor evidence="1">
        <name>Zn(2+)</name>
        <dbReference type="ChEBI" id="CHEBI:29105"/>
    </cofactor>
    <text evidence="1">Binds 1 zinc ion per subunit.</text>
</comment>
<comment type="subcellular location">
    <subcellularLocation>
        <location evidence="1">Cytoplasm</location>
    </subcellularLocation>
</comment>
<comment type="domain">
    <text evidence="1">Consists of three domains; the N-terminal catalytic domain, the editing domain and the C-terminal C-Ala domain. The editing domain removes incorrectly charged amino acids, while the C-Ala domain, along with tRNA(Ala), serves as a bridge to cooperatively bring together the editing and aminoacylation centers thus stimulating deacylation of misacylated tRNAs.</text>
</comment>
<comment type="similarity">
    <text evidence="1">Belongs to the class-II aminoacyl-tRNA synthetase family.</text>
</comment>
<organism>
    <name type="scientific">Xylella fastidiosa (strain M12)</name>
    <dbReference type="NCBI Taxonomy" id="405440"/>
    <lineage>
        <taxon>Bacteria</taxon>
        <taxon>Pseudomonadati</taxon>
        <taxon>Pseudomonadota</taxon>
        <taxon>Gammaproteobacteria</taxon>
        <taxon>Lysobacterales</taxon>
        <taxon>Lysobacteraceae</taxon>
        <taxon>Xylella</taxon>
    </lineage>
</organism>
<evidence type="ECO:0000255" key="1">
    <source>
        <dbReference type="HAMAP-Rule" id="MF_00036"/>
    </source>
</evidence>
<keyword id="KW-0030">Aminoacyl-tRNA synthetase</keyword>
<keyword id="KW-0067">ATP-binding</keyword>
<keyword id="KW-0963">Cytoplasm</keyword>
<keyword id="KW-0436">Ligase</keyword>
<keyword id="KW-0479">Metal-binding</keyword>
<keyword id="KW-0547">Nucleotide-binding</keyword>
<keyword id="KW-0648">Protein biosynthesis</keyword>
<keyword id="KW-0694">RNA-binding</keyword>
<keyword id="KW-0820">tRNA-binding</keyword>
<keyword id="KW-0862">Zinc</keyword>
<reference key="1">
    <citation type="journal article" date="2010" name="J. Bacteriol.">
        <title>Whole genome sequences of two Xylella fastidiosa strains (M12 and M23) causing almond leaf scorch disease in California.</title>
        <authorList>
            <person name="Chen J."/>
            <person name="Xie G."/>
            <person name="Han S."/>
            <person name="Chertkov O."/>
            <person name="Sims D."/>
            <person name="Civerolo E.L."/>
        </authorList>
    </citation>
    <scope>NUCLEOTIDE SEQUENCE [LARGE SCALE GENOMIC DNA]</scope>
    <source>
        <strain>M12</strain>
    </source>
</reference>
<accession>B0U1K9</accession>
<name>SYA_XYLFM</name>